<name>DAPE_VIBCH</name>
<dbReference type="EC" id="3.5.1.18"/>
<dbReference type="EMBL" id="AE003852">
    <property type="protein sequence ID" value="AAF95297.1"/>
    <property type="molecule type" value="Genomic_DNA"/>
</dbReference>
<dbReference type="PIR" id="C82113">
    <property type="entry name" value="C82113"/>
</dbReference>
<dbReference type="RefSeq" id="NP_231783.1">
    <property type="nucleotide sequence ID" value="NC_002505.1"/>
</dbReference>
<dbReference type="RefSeq" id="WP_000132407.1">
    <property type="nucleotide sequence ID" value="NZ_LT906614.1"/>
</dbReference>
<dbReference type="PDB" id="4ONW">
    <property type="method" value="X-ray"/>
    <property type="resolution" value="1.65 A"/>
    <property type="chains" value="A/B=2-181, A/B=295-377"/>
</dbReference>
<dbReference type="PDB" id="4OP4">
    <property type="method" value="X-ray"/>
    <property type="resolution" value="1.65 A"/>
    <property type="chains" value="A/B=2-181, A/B=295-377"/>
</dbReference>
<dbReference type="PDBsum" id="4ONW"/>
<dbReference type="PDBsum" id="4OP4"/>
<dbReference type="SMR" id="Q9KQ52"/>
<dbReference type="STRING" id="243277.VC_2152"/>
<dbReference type="DNASU" id="2613288"/>
<dbReference type="EnsemblBacteria" id="AAF95297">
    <property type="protein sequence ID" value="AAF95297"/>
    <property type="gene ID" value="VC_2152"/>
</dbReference>
<dbReference type="KEGG" id="vch:VC_2152"/>
<dbReference type="PATRIC" id="fig|243277.26.peg.2055"/>
<dbReference type="eggNOG" id="COG0624">
    <property type="taxonomic scope" value="Bacteria"/>
</dbReference>
<dbReference type="HOGENOM" id="CLU_021802_4_0_6"/>
<dbReference type="BRENDA" id="3.5.1.18">
    <property type="organism ID" value="6626"/>
</dbReference>
<dbReference type="UniPathway" id="UPA00034">
    <property type="reaction ID" value="UER00021"/>
</dbReference>
<dbReference type="EvolutionaryTrace" id="Q9KQ52"/>
<dbReference type="Proteomes" id="UP000000584">
    <property type="component" value="Chromosome 1"/>
</dbReference>
<dbReference type="GO" id="GO:0005829">
    <property type="term" value="C:cytosol"/>
    <property type="evidence" value="ECO:0000318"/>
    <property type="project" value="GO_Central"/>
</dbReference>
<dbReference type="GO" id="GO:0050897">
    <property type="term" value="F:cobalt ion binding"/>
    <property type="evidence" value="ECO:0007669"/>
    <property type="project" value="UniProtKB-UniRule"/>
</dbReference>
<dbReference type="GO" id="GO:0009014">
    <property type="term" value="F:succinyl-diaminopimelate desuccinylase activity"/>
    <property type="evidence" value="ECO:0000318"/>
    <property type="project" value="GO_Central"/>
</dbReference>
<dbReference type="GO" id="GO:0008270">
    <property type="term" value="F:zinc ion binding"/>
    <property type="evidence" value="ECO:0007669"/>
    <property type="project" value="UniProtKB-UniRule"/>
</dbReference>
<dbReference type="GO" id="GO:0019877">
    <property type="term" value="P:diaminopimelate biosynthetic process"/>
    <property type="evidence" value="ECO:0007669"/>
    <property type="project" value="UniProtKB-UniRule"/>
</dbReference>
<dbReference type="GO" id="GO:0009089">
    <property type="term" value="P:lysine biosynthetic process via diaminopimelate"/>
    <property type="evidence" value="ECO:0000318"/>
    <property type="project" value="GO_Central"/>
</dbReference>
<dbReference type="CDD" id="cd03891">
    <property type="entry name" value="M20_DapE_proteobac"/>
    <property type="match status" value="1"/>
</dbReference>
<dbReference type="FunFam" id="3.30.70.360:FF:000011">
    <property type="entry name" value="Succinyl-diaminopimelate desuccinylase"/>
    <property type="match status" value="1"/>
</dbReference>
<dbReference type="FunFam" id="3.40.630.10:FF:000005">
    <property type="entry name" value="Succinyl-diaminopimelate desuccinylase"/>
    <property type="match status" value="1"/>
</dbReference>
<dbReference type="FunFam" id="3.40.630.10:FF:000010">
    <property type="entry name" value="Succinyl-diaminopimelate desuccinylase"/>
    <property type="match status" value="1"/>
</dbReference>
<dbReference type="Gene3D" id="3.40.630.10">
    <property type="entry name" value="Zn peptidases"/>
    <property type="match status" value="2"/>
</dbReference>
<dbReference type="HAMAP" id="MF_01690">
    <property type="entry name" value="DapE"/>
    <property type="match status" value="1"/>
</dbReference>
<dbReference type="InterPro" id="IPR001261">
    <property type="entry name" value="ArgE/DapE_CS"/>
</dbReference>
<dbReference type="InterPro" id="IPR036264">
    <property type="entry name" value="Bact_exopeptidase_dim_dom"/>
</dbReference>
<dbReference type="InterPro" id="IPR005941">
    <property type="entry name" value="DapE_proteobac"/>
</dbReference>
<dbReference type="InterPro" id="IPR002933">
    <property type="entry name" value="Peptidase_M20"/>
</dbReference>
<dbReference type="InterPro" id="IPR011650">
    <property type="entry name" value="Peptidase_M20_dimer"/>
</dbReference>
<dbReference type="InterPro" id="IPR050072">
    <property type="entry name" value="Peptidase_M20A"/>
</dbReference>
<dbReference type="NCBIfam" id="TIGR01246">
    <property type="entry name" value="dapE_proteo"/>
    <property type="match status" value="1"/>
</dbReference>
<dbReference type="NCBIfam" id="NF009557">
    <property type="entry name" value="PRK13009.1"/>
    <property type="match status" value="1"/>
</dbReference>
<dbReference type="PANTHER" id="PTHR43808">
    <property type="entry name" value="ACETYLORNITHINE DEACETYLASE"/>
    <property type="match status" value="1"/>
</dbReference>
<dbReference type="PANTHER" id="PTHR43808:SF31">
    <property type="entry name" value="N-ACETYL-L-CITRULLINE DEACETYLASE"/>
    <property type="match status" value="1"/>
</dbReference>
<dbReference type="Pfam" id="PF07687">
    <property type="entry name" value="M20_dimer"/>
    <property type="match status" value="1"/>
</dbReference>
<dbReference type="Pfam" id="PF01546">
    <property type="entry name" value="Peptidase_M20"/>
    <property type="match status" value="1"/>
</dbReference>
<dbReference type="SUPFAM" id="SSF55031">
    <property type="entry name" value="Bacterial exopeptidase dimerisation domain"/>
    <property type="match status" value="1"/>
</dbReference>
<dbReference type="SUPFAM" id="SSF53187">
    <property type="entry name" value="Zn-dependent exopeptidases"/>
    <property type="match status" value="1"/>
</dbReference>
<dbReference type="PROSITE" id="PS00759">
    <property type="entry name" value="ARGE_DAPE_CPG2_2"/>
    <property type="match status" value="1"/>
</dbReference>
<keyword id="KW-0002">3D-structure</keyword>
<keyword id="KW-0028">Amino-acid biosynthesis</keyword>
<keyword id="KW-0170">Cobalt</keyword>
<keyword id="KW-0220">Diaminopimelate biosynthesis</keyword>
<keyword id="KW-0378">Hydrolase</keyword>
<keyword id="KW-0457">Lysine biosynthesis</keyword>
<keyword id="KW-0479">Metal-binding</keyword>
<keyword id="KW-1185">Reference proteome</keyword>
<keyword id="KW-0862">Zinc</keyword>
<proteinExistence type="evidence at protein level"/>
<evidence type="ECO:0000250" key="1"/>
<evidence type="ECO:0000269" key="2">
    <source ref="2"/>
</evidence>
<evidence type="ECO:0000305" key="3"/>
<evidence type="ECO:0007744" key="4">
    <source>
        <dbReference type="PDB" id="4ONW"/>
    </source>
</evidence>
<evidence type="ECO:0007744" key="5">
    <source>
        <dbReference type="PDB" id="4OP4"/>
    </source>
</evidence>
<evidence type="ECO:0007829" key="6">
    <source>
        <dbReference type="PDB" id="4ONW"/>
    </source>
</evidence>
<reference key="1">
    <citation type="journal article" date="2000" name="Nature">
        <title>DNA sequence of both chromosomes of the cholera pathogen Vibrio cholerae.</title>
        <authorList>
            <person name="Heidelberg J.F."/>
            <person name="Eisen J.A."/>
            <person name="Nelson W.C."/>
            <person name="Clayton R.A."/>
            <person name="Gwinn M.L."/>
            <person name="Dodson R.J."/>
            <person name="Haft D.H."/>
            <person name="Hickey E.K."/>
            <person name="Peterson J.D."/>
            <person name="Umayam L.A."/>
            <person name="Gill S.R."/>
            <person name="Nelson K.E."/>
            <person name="Read T.D."/>
            <person name="Tettelin H."/>
            <person name="Richardson D.L."/>
            <person name="Ermolaeva M.D."/>
            <person name="Vamathevan J.J."/>
            <person name="Bass S."/>
            <person name="Qin H."/>
            <person name="Dragoi I."/>
            <person name="Sellers P."/>
            <person name="McDonald L.A."/>
            <person name="Utterback T.R."/>
            <person name="Fleischmann R.D."/>
            <person name="Nierman W.C."/>
            <person name="White O."/>
            <person name="Salzberg S.L."/>
            <person name="Smith H.O."/>
            <person name="Colwell R.R."/>
            <person name="Mekalanos J.J."/>
            <person name="Venter J.C."/>
            <person name="Fraser C.M."/>
        </authorList>
    </citation>
    <scope>NUCLEOTIDE SEQUENCE [LARGE SCALE GENOMIC DNA]</scope>
    <source>
        <strain>ATCC 39315 / El Tor Inaba N16961</strain>
    </source>
</reference>
<reference evidence="4 5" key="2">
    <citation type="submission" date="2011-07" db="PDB data bank">
        <title>Crystal structure of the catalytic domain of dape protein V.Cholerea in the Zn bound form.</title>
        <authorList>
            <person name="Nocek B."/>
            <person name="Makowska-Grzyska M."/>
            <person name="Gu M."/>
            <person name="Jedrzejczak R."/>
            <person name="Anderson W.F."/>
            <person name="Joachimiak A."/>
        </authorList>
    </citation>
    <scope>X-RAY CRYSTALLOGRAPHY (1.65 ANGSTROMS) IN COMPLEX WITH ZINC IONS</scope>
    <scope>COFACTOR</scope>
</reference>
<protein>
    <recommendedName>
        <fullName>Succinyl-diaminopimelate desuccinylase</fullName>
        <shortName>SDAP desuccinylase</shortName>
        <ecNumber>3.5.1.18</ecNumber>
    </recommendedName>
    <alternativeName>
        <fullName>N-succinyl-LL-2,6-diaminoheptanedioate amidohydrolase</fullName>
    </alternativeName>
</protein>
<accession>Q9KQ52</accession>
<organism>
    <name type="scientific">Vibrio cholerae serotype O1 (strain ATCC 39315 / El Tor Inaba N16961)</name>
    <dbReference type="NCBI Taxonomy" id="243277"/>
    <lineage>
        <taxon>Bacteria</taxon>
        <taxon>Pseudomonadati</taxon>
        <taxon>Pseudomonadota</taxon>
        <taxon>Gammaproteobacteria</taxon>
        <taxon>Vibrionales</taxon>
        <taxon>Vibrionaceae</taxon>
        <taxon>Vibrio</taxon>
    </lineage>
</organism>
<comment type="function">
    <text evidence="1">Catalyzes the hydrolysis of N-succinyl-L,L-diaminopimelic acid (SDAP), forming succinate and LL-2,6-diaminopimelate (DAP), an intermediate involved in the bacterial biosynthesis of lysine and meso-diaminopimelic acid, an essential component of bacterial cell walls.</text>
</comment>
<comment type="catalytic activity">
    <reaction>
        <text>N-succinyl-(2S,6S)-2,6-diaminopimelate + H2O = (2S,6S)-2,6-diaminopimelate + succinate</text>
        <dbReference type="Rhea" id="RHEA:22608"/>
        <dbReference type="ChEBI" id="CHEBI:15377"/>
        <dbReference type="ChEBI" id="CHEBI:30031"/>
        <dbReference type="ChEBI" id="CHEBI:57609"/>
        <dbReference type="ChEBI" id="CHEBI:58087"/>
        <dbReference type="EC" id="3.5.1.18"/>
    </reaction>
</comment>
<comment type="cofactor">
    <cofactor evidence="2">
        <name>Zn(2+)</name>
        <dbReference type="ChEBI" id="CHEBI:29105"/>
    </cofactor>
    <text evidence="2">Binds 2 Zn(2+) ion per subunit.</text>
</comment>
<comment type="pathway">
    <text>Amino-acid biosynthesis; L-lysine biosynthesis via DAP pathway; LL-2,6-diaminopimelate from (S)-tetrahydrodipicolinate (succinylase route): step 3/3.</text>
</comment>
<comment type="subunit">
    <text evidence="1">Homodimer.</text>
</comment>
<comment type="similarity">
    <text evidence="3">Belongs to the peptidase M20A family. DapE subfamily.</text>
</comment>
<gene>
    <name type="primary">dapE</name>
    <name type="ordered locus">VC_2152</name>
</gene>
<feature type="chain" id="PRO_0000375766" description="Succinyl-diaminopimelate desuccinylase">
    <location>
        <begin position="1"/>
        <end position="377"/>
    </location>
</feature>
<feature type="active site" evidence="1">
    <location>
        <position position="70"/>
    </location>
</feature>
<feature type="active site" description="Proton acceptor" evidence="1">
    <location>
        <position position="135"/>
    </location>
</feature>
<feature type="binding site" evidence="5">
    <location>
        <position position="68"/>
    </location>
    <ligand>
        <name>Zn(2+)</name>
        <dbReference type="ChEBI" id="CHEBI:29105"/>
        <label>1</label>
    </ligand>
</feature>
<feature type="binding site" evidence="5">
    <location>
        <position position="101"/>
    </location>
    <ligand>
        <name>Zn(2+)</name>
        <dbReference type="ChEBI" id="CHEBI:29105"/>
        <label>1</label>
    </ligand>
</feature>
<feature type="binding site" evidence="5">
    <location>
        <position position="101"/>
    </location>
    <ligand>
        <name>Zn(2+)</name>
        <dbReference type="ChEBI" id="CHEBI:29105"/>
        <label>2</label>
    </ligand>
</feature>
<feature type="binding site" evidence="5">
    <location>
        <position position="136"/>
    </location>
    <ligand>
        <name>Zn(2+)</name>
        <dbReference type="ChEBI" id="CHEBI:29105"/>
        <label>2</label>
    </ligand>
</feature>
<feature type="binding site" evidence="5">
    <location>
        <position position="164"/>
    </location>
    <ligand>
        <name>Zn(2+)</name>
        <dbReference type="ChEBI" id="CHEBI:29105"/>
        <label>1</label>
    </ligand>
</feature>
<feature type="binding site" evidence="5">
    <location>
        <position position="350"/>
    </location>
    <ligand>
        <name>Zn(2+)</name>
        <dbReference type="ChEBI" id="CHEBI:29105"/>
        <label>2</label>
    </ligand>
</feature>
<feature type="helix" evidence="6">
    <location>
        <begin position="5"/>
        <end position="15"/>
    </location>
</feature>
<feature type="helix" evidence="6">
    <location>
        <begin position="26"/>
        <end position="36"/>
    </location>
</feature>
<feature type="strand" evidence="6">
    <location>
        <begin position="40"/>
        <end position="46"/>
    </location>
</feature>
<feature type="strand" evidence="6">
    <location>
        <begin position="49"/>
        <end position="56"/>
    </location>
</feature>
<feature type="strand" evidence="6">
    <location>
        <begin position="58"/>
        <end position="60"/>
    </location>
</feature>
<feature type="strand" evidence="6">
    <location>
        <begin position="62"/>
        <end position="68"/>
    </location>
</feature>
<feature type="helix" evidence="6">
    <location>
        <begin position="77"/>
        <end position="79"/>
    </location>
</feature>
<feature type="strand" evidence="6">
    <location>
        <begin position="88"/>
        <end position="90"/>
    </location>
</feature>
<feature type="strand" evidence="6">
    <location>
        <begin position="93"/>
        <end position="96"/>
    </location>
</feature>
<feature type="turn" evidence="6">
    <location>
        <begin position="97"/>
        <end position="102"/>
    </location>
</feature>
<feature type="helix" evidence="6">
    <location>
        <begin position="103"/>
        <end position="119"/>
    </location>
</feature>
<feature type="strand" evidence="6">
    <location>
        <begin position="124"/>
        <end position="133"/>
    </location>
</feature>
<feature type="helix" evidence="6">
    <location>
        <begin position="142"/>
        <end position="152"/>
    </location>
</feature>
<feature type="strand" evidence="6">
    <location>
        <begin position="159"/>
        <end position="162"/>
    </location>
</feature>
<feature type="strand" evidence="6">
    <location>
        <begin position="167"/>
        <end position="170"/>
    </location>
</feature>
<feature type="strand" evidence="6">
    <location>
        <begin position="173"/>
        <end position="177"/>
    </location>
</feature>
<feature type="helix" evidence="6">
    <location>
        <begin position="301"/>
        <end position="314"/>
    </location>
</feature>
<feature type="strand" evidence="6">
    <location>
        <begin position="319"/>
        <end position="323"/>
    </location>
</feature>
<feature type="helix" evidence="6">
    <location>
        <begin position="327"/>
        <end position="335"/>
    </location>
</feature>
<feature type="strand" evidence="6">
    <location>
        <begin position="338"/>
        <end position="341"/>
    </location>
</feature>
<feature type="turn" evidence="6">
    <location>
        <begin position="347"/>
        <end position="350"/>
    </location>
</feature>
<feature type="strand" evidence="6">
    <location>
        <begin position="355"/>
        <end position="357"/>
    </location>
</feature>
<feature type="helix" evidence="6">
    <location>
        <begin position="358"/>
        <end position="376"/>
    </location>
</feature>
<sequence length="377" mass="40749">MTDSPVLALAKELISRQSVTPADAGCQDLMIERLKALGFEIESMVFEDTTNFWARRGTQSPLFVFAGHTDVVPAGPLSQWHTPPFEPTVIDGFLHGRGAADMKGSLACMIVAVERFIAEHPDHQGSIGFLITSDEEGPFINGTVRVVETLMARNELIDMCIVGEPSSTLAVGDVVKNGRRGSITGDLKVKGTQGHVAYPHLANNPVHKALPALAELAATQWDEGNAYFPPTSFQIPNLQAGTGASNVIPGEFDVQFNFRFSTELTDEEIKRRVHSVLDAHGLDYDVKWTLSGQPFLTDTGELLAAVVAAVEEVNHQAPALLTTGGTSDGRFIAQMGAQVVELGPVNATIHKVNECVRIADLEKLTDMYQKTLNHLLG</sequence>